<sequence length="122" mass="13514">MLNTLLVVGFGGFIGAILRMLSINLVNKFFPYSISFGTLFVNVLGSFIIGLLFSYAQNKGLSPLLKSFISTGFLGAFTTFSTFSYQNLLLLQSGNYLHFALNIILNVFLCLFAAWLGFLIFK</sequence>
<gene>
    <name evidence="1" type="primary">fluC</name>
    <name evidence="1" type="synonym">crcB</name>
    <name type="ordered locus">Cj0517</name>
</gene>
<feature type="chain" id="PRO_0000110081" description="Fluoride-specific ion channel FluC">
    <location>
        <begin position="1"/>
        <end position="122"/>
    </location>
</feature>
<feature type="transmembrane region" description="Helical" evidence="1">
    <location>
        <begin position="6"/>
        <end position="26"/>
    </location>
</feature>
<feature type="transmembrane region" description="Helical" evidence="1">
    <location>
        <begin position="33"/>
        <end position="53"/>
    </location>
</feature>
<feature type="transmembrane region" description="Helical" evidence="1">
    <location>
        <begin position="60"/>
        <end position="80"/>
    </location>
</feature>
<feature type="transmembrane region" description="Helical" evidence="1">
    <location>
        <begin position="101"/>
        <end position="121"/>
    </location>
</feature>
<feature type="binding site" evidence="1">
    <location>
        <position position="75"/>
    </location>
    <ligand>
        <name>Na(+)</name>
        <dbReference type="ChEBI" id="CHEBI:29101"/>
        <note>structural</note>
    </ligand>
</feature>
<feature type="binding site" evidence="1">
    <location>
        <position position="78"/>
    </location>
    <ligand>
        <name>Na(+)</name>
        <dbReference type="ChEBI" id="CHEBI:29101"/>
        <note>structural</note>
    </ligand>
</feature>
<accession>Q9PHZ4</accession>
<accession>Q0PAZ8</accession>
<organism>
    <name type="scientific">Campylobacter jejuni subsp. jejuni serotype O:2 (strain ATCC 700819 / NCTC 11168)</name>
    <dbReference type="NCBI Taxonomy" id="192222"/>
    <lineage>
        <taxon>Bacteria</taxon>
        <taxon>Pseudomonadati</taxon>
        <taxon>Campylobacterota</taxon>
        <taxon>Epsilonproteobacteria</taxon>
        <taxon>Campylobacterales</taxon>
        <taxon>Campylobacteraceae</taxon>
        <taxon>Campylobacter</taxon>
    </lineage>
</organism>
<protein>
    <recommendedName>
        <fullName evidence="1">Fluoride-specific ion channel FluC</fullName>
    </recommendedName>
</protein>
<dbReference type="EMBL" id="AL111168">
    <property type="protein sequence ID" value="CAL34664.1"/>
    <property type="molecule type" value="Genomic_DNA"/>
</dbReference>
<dbReference type="PIR" id="F81397">
    <property type="entry name" value="F81397"/>
</dbReference>
<dbReference type="RefSeq" id="WP_002858490.1">
    <property type="nucleotide sequence ID" value="NZ_SZUC01000002.1"/>
</dbReference>
<dbReference type="RefSeq" id="YP_002343949.1">
    <property type="nucleotide sequence ID" value="NC_002163.1"/>
</dbReference>
<dbReference type="SMR" id="Q9PHZ4"/>
<dbReference type="IntAct" id="Q9PHZ4">
    <property type="interactions" value="2"/>
</dbReference>
<dbReference type="STRING" id="192222.Cj0517"/>
<dbReference type="TCDB" id="1.A.43.1.11">
    <property type="family name" value="the camphor resistance or fluoride exporter (fluc) family"/>
</dbReference>
<dbReference type="PaxDb" id="192222-Cj0517"/>
<dbReference type="EnsemblBacteria" id="CAL34664">
    <property type="protein sequence ID" value="CAL34664"/>
    <property type="gene ID" value="Cj0517"/>
</dbReference>
<dbReference type="GeneID" id="904846"/>
<dbReference type="KEGG" id="cje:Cj0517"/>
<dbReference type="PATRIC" id="fig|192222.6.peg.510"/>
<dbReference type="eggNOG" id="COG0239">
    <property type="taxonomic scope" value="Bacteria"/>
</dbReference>
<dbReference type="HOGENOM" id="CLU_114342_3_0_7"/>
<dbReference type="OrthoDB" id="9806299at2"/>
<dbReference type="Proteomes" id="UP000000799">
    <property type="component" value="Chromosome"/>
</dbReference>
<dbReference type="GO" id="GO:0005886">
    <property type="term" value="C:plasma membrane"/>
    <property type="evidence" value="ECO:0007669"/>
    <property type="project" value="UniProtKB-SubCell"/>
</dbReference>
<dbReference type="GO" id="GO:0062054">
    <property type="term" value="F:fluoride channel activity"/>
    <property type="evidence" value="ECO:0007669"/>
    <property type="project" value="UniProtKB-UniRule"/>
</dbReference>
<dbReference type="GO" id="GO:0046872">
    <property type="term" value="F:metal ion binding"/>
    <property type="evidence" value="ECO:0007669"/>
    <property type="project" value="UniProtKB-KW"/>
</dbReference>
<dbReference type="GO" id="GO:0140114">
    <property type="term" value="P:cellular detoxification of fluoride"/>
    <property type="evidence" value="ECO:0007669"/>
    <property type="project" value="UniProtKB-UniRule"/>
</dbReference>
<dbReference type="HAMAP" id="MF_00454">
    <property type="entry name" value="FluC"/>
    <property type="match status" value="1"/>
</dbReference>
<dbReference type="InterPro" id="IPR003691">
    <property type="entry name" value="FluC"/>
</dbReference>
<dbReference type="NCBIfam" id="TIGR00494">
    <property type="entry name" value="crcB"/>
    <property type="match status" value="1"/>
</dbReference>
<dbReference type="PANTHER" id="PTHR28259">
    <property type="entry name" value="FLUORIDE EXPORT PROTEIN 1-RELATED"/>
    <property type="match status" value="1"/>
</dbReference>
<dbReference type="PANTHER" id="PTHR28259:SF1">
    <property type="entry name" value="FLUORIDE EXPORT PROTEIN 1-RELATED"/>
    <property type="match status" value="1"/>
</dbReference>
<dbReference type="Pfam" id="PF02537">
    <property type="entry name" value="CRCB"/>
    <property type="match status" value="1"/>
</dbReference>
<keyword id="KW-0997">Cell inner membrane</keyword>
<keyword id="KW-1003">Cell membrane</keyword>
<keyword id="KW-0407">Ion channel</keyword>
<keyword id="KW-0406">Ion transport</keyword>
<keyword id="KW-0472">Membrane</keyword>
<keyword id="KW-0479">Metal-binding</keyword>
<keyword id="KW-1185">Reference proteome</keyword>
<keyword id="KW-0915">Sodium</keyword>
<keyword id="KW-0812">Transmembrane</keyword>
<keyword id="KW-1133">Transmembrane helix</keyword>
<keyword id="KW-0813">Transport</keyword>
<reference key="1">
    <citation type="journal article" date="2000" name="Nature">
        <title>The genome sequence of the food-borne pathogen Campylobacter jejuni reveals hypervariable sequences.</title>
        <authorList>
            <person name="Parkhill J."/>
            <person name="Wren B.W."/>
            <person name="Mungall K.L."/>
            <person name="Ketley J.M."/>
            <person name="Churcher C.M."/>
            <person name="Basham D."/>
            <person name="Chillingworth T."/>
            <person name="Davies R.M."/>
            <person name="Feltwell T."/>
            <person name="Holroyd S."/>
            <person name="Jagels K."/>
            <person name="Karlyshev A.V."/>
            <person name="Moule S."/>
            <person name="Pallen M.J."/>
            <person name="Penn C.W."/>
            <person name="Quail M.A."/>
            <person name="Rajandream M.A."/>
            <person name="Rutherford K.M."/>
            <person name="van Vliet A.H.M."/>
            <person name="Whitehead S."/>
            <person name="Barrell B.G."/>
        </authorList>
    </citation>
    <scope>NUCLEOTIDE SEQUENCE [LARGE SCALE GENOMIC DNA]</scope>
    <source>
        <strain>ATCC 700819 / NCTC 11168</strain>
    </source>
</reference>
<evidence type="ECO:0000255" key="1">
    <source>
        <dbReference type="HAMAP-Rule" id="MF_00454"/>
    </source>
</evidence>
<name>FLUC_CAMJE</name>
<comment type="function">
    <text evidence="1">Fluoride-specific ion channel. Important for reducing fluoride concentration in the cell, thus reducing its toxicity.</text>
</comment>
<comment type="catalytic activity">
    <reaction evidence="1">
        <text>fluoride(in) = fluoride(out)</text>
        <dbReference type="Rhea" id="RHEA:76159"/>
        <dbReference type="ChEBI" id="CHEBI:17051"/>
    </reaction>
    <physiologicalReaction direction="left-to-right" evidence="1">
        <dbReference type="Rhea" id="RHEA:76160"/>
    </physiologicalReaction>
</comment>
<comment type="activity regulation">
    <text evidence="1">Na(+) is not transported, but it plays an essential structural role and its presence is essential for fluoride channel function.</text>
</comment>
<comment type="subcellular location">
    <subcellularLocation>
        <location evidence="1">Cell inner membrane</location>
        <topology evidence="1">Multi-pass membrane protein</topology>
    </subcellularLocation>
</comment>
<comment type="similarity">
    <text evidence="1">Belongs to the fluoride channel Fluc/FEX (TC 1.A.43) family.</text>
</comment>
<proteinExistence type="inferred from homology"/>